<organism>
    <name type="scientific">Mus musculus</name>
    <name type="common">Mouse</name>
    <dbReference type="NCBI Taxonomy" id="10090"/>
    <lineage>
        <taxon>Eukaryota</taxon>
        <taxon>Metazoa</taxon>
        <taxon>Chordata</taxon>
        <taxon>Craniata</taxon>
        <taxon>Vertebrata</taxon>
        <taxon>Euteleostomi</taxon>
        <taxon>Mammalia</taxon>
        <taxon>Eutheria</taxon>
        <taxon>Euarchontoglires</taxon>
        <taxon>Glires</taxon>
        <taxon>Rodentia</taxon>
        <taxon>Myomorpha</taxon>
        <taxon>Muroidea</taxon>
        <taxon>Muridae</taxon>
        <taxon>Murinae</taxon>
        <taxon>Mus</taxon>
        <taxon>Mus</taxon>
    </lineage>
</organism>
<protein>
    <recommendedName>
        <fullName evidence="8">Uridylate-specific endoribonuclease</fullName>
        <ecNumber evidence="4">3.1.-.-</ecNumber>
        <ecNumber evidence="1">4.6.1.-</ecNumber>
    </recommendedName>
    <alternativeName>
        <fullName>Placental protein 11-related protein</fullName>
        <shortName>PP11-related protein</shortName>
    </alternativeName>
    <alternativeName>
        <fullName>Protein endoU</fullName>
    </alternativeName>
    <alternativeName>
        <fullName>T-cell-specific protein 30</fullName>
        <shortName>Tcl-30</shortName>
    </alternativeName>
</protein>
<accession>Q3V188</accession>
<accession>Q01084</accession>
<evidence type="ECO:0000250" key="1">
    <source>
        <dbReference type="UniProtKB" id="P21128"/>
    </source>
</evidence>
<evidence type="ECO:0000255" key="2"/>
<evidence type="ECO:0000255" key="3">
    <source>
        <dbReference type="PROSITE-ProRule" id="PRU00350"/>
    </source>
</evidence>
<evidence type="ECO:0000255" key="4">
    <source>
        <dbReference type="PROSITE-ProRule" id="PRU01304"/>
    </source>
</evidence>
<evidence type="ECO:0000269" key="5">
    <source>
    </source>
</evidence>
<evidence type="ECO:0000269" key="6">
    <source>
    </source>
</evidence>
<evidence type="ECO:0000303" key="7">
    <source>
    </source>
</evidence>
<evidence type="ECO:0000305" key="8"/>
<dbReference type="EC" id="3.1.-.-" evidence="4"/>
<dbReference type="EC" id="4.6.1.-" evidence="1"/>
<dbReference type="EMBL" id="M95545">
    <property type="protein sequence ID" value="AAA40405.1"/>
    <property type="molecule type" value="mRNA"/>
</dbReference>
<dbReference type="EMBL" id="AK132616">
    <property type="protein sequence ID" value="BAE21263.1"/>
    <property type="molecule type" value="mRNA"/>
</dbReference>
<dbReference type="CCDS" id="CCDS27783.1">
    <molecule id="Q3V188-2"/>
</dbReference>
<dbReference type="CCDS" id="CCDS49712.1">
    <molecule id="Q3V188-1"/>
</dbReference>
<dbReference type="PIR" id="A46498">
    <property type="entry name" value="A46498"/>
</dbReference>
<dbReference type="RefSeq" id="NP_001162164.1">
    <molecule id="Q3V188-1"/>
    <property type="nucleotide sequence ID" value="NM_001168693.1"/>
</dbReference>
<dbReference type="RefSeq" id="NP_032928.1">
    <molecule id="Q3V188-2"/>
    <property type="nucleotide sequence ID" value="NM_008902.3"/>
</dbReference>
<dbReference type="SMR" id="Q3V188"/>
<dbReference type="FunCoup" id="Q3V188">
    <property type="interactions" value="424"/>
</dbReference>
<dbReference type="STRING" id="10090.ENSMUSP00000023105"/>
<dbReference type="PhosphoSitePlus" id="Q3V188"/>
<dbReference type="PaxDb" id="10090-ENSMUSP00000023105"/>
<dbReference type="ProteomicsDB" id="275617">
    <molecule id="Q3V188-1"/>
</dbReference>
<dbReference type="ProteomicsDB" id="275618">
    <molecule id="Q3V188-2"/>
</dbReference>
<dbReference type="Antibodypedia" id="2843">
    <property type="antibodies" value="52 antibodies from 19 providers"/>
</dbReference>
<dbReference type="DNASU" id="19011"/>
<dbReference type="Ensembl" id="ENSMUST00000023105.5">
    <molecule id="Q3V188-2"/>
    <property type="protein sequence ID" value="ENSMUSP00000023105.4"/>
    <property type="gene ID" value="ENSMUSG00000022468.13"/>
</dbReference>
<dbReference type="Ensembl" id="ENSMUST00000100249.10">
    <molecule id="Q3V188-1"/>
    <property type="protein sequence ID" value="ENSMUSP00000097820.3"/>
    <property type="gene ID" value="ENSMUSG00000022468.13"/>
</dbReference>
<dbReference type="GeneID" id="19011"/>
<dbReference type="KEGG" id="mmu:19011"/>
<dbReference type="UCSC" id="uc007xkw.1">
    <molecule id="Q3V188-2"/>
    <property type="organism name" value="mouse"/>
</dbReference>
<dbReference type="UCSC" id="uc007xkx.1">
    <molecule id="Q3V188-1"/>
    <property type="organism name" value="mouse"/>
</dbReference>
<dbReference type="AGR" id="MGI:97746"/>
<dbReference type="CTD" id="8909"/>
<dbReference type="MGI" id="MGI:97746">
    <property type="gene designation" value="Endou"/>
</dbReference>
<dbReference type="VEuPathDB" id="HostDB:ENSMUSG00000022468"/>
<dbReference type="eggNOG" id="KOG2849">
    <property type="taxonomic scope" value="Eukaryota"/>
</dbReference>
<dbReference type="GeneTree" id="ENSGT00530000063825"/>
<dbReference type="HOGENOM" id="CLU_048034_0_0_1"/>
<dbReference type="InParanoid" id="Q3V188"/>
<dbReference type="OMA" id="PGRACHL"/>
<dbReference type="OrthoDB" id="8470at9989"/>
<dbReference type="PhylomeDB" id="Q3V188"/>
<dbReference type="TreeFam" id="TF319848"/>
<dbReference type="BioGRID-ORCS" id="19011">
    <property type="hits" value="3 hits in 77 CRISPR screens"/>
</dbReference>
<dbReference type="ChiTaRS" id="Endou">
    <property type="organism name" value="mouse"/>
</dbReference>
<dbReference type="PRO" id="PR:Q3V188"/>
<dbReference type="Proteomes" id="UP000000589">
    <property type="component" value="Chromosome 15"/>
</dbReference>
<dbReference type="RNAct" id="Q3V188">
    <property type="molecule type" value="protein"/>
</dbReference>
<dbReference type="Bgee" id="ENSMUSG00000022468">
    <property type="expression patterns" value="Expressed in thymus and 82 other cell types or tissues"/>
</dbReference>
<dbReference type="ExpressionAtlas" id="Q3V188">
    <property type="expression patterns" value="baseline and differential"/>
</dbReference>
<dbReference type="GO" id="GO:0005737">
    <property type="term" value="C:cytoplasm"/>
    <property type="evidence" value="ECO:0000250"/>
    <property type="project" value="UniProtKB"/>
</dbReference>
<dbReference type="GO" id="GO:0005576">
    <property type="term" value="C:extracellular region"/>
    <property type="evidence" value="ECO:0007669"/>
    <property type="project" value="UniProtKB-SubCell"/>
</dbReference>
<dbReference type="GO" id="GO:0016829">
    <property type="term" value="F:lyase activity"/>
    <property type="evidence" value="ECO:0007669"/>
    <property type="project" value="UniProtKB-KW"/>
</dbReference>
<dbReference type="GO" id="GO:0046872">
    <property type="term" value="F:metal ion binding"/>
    <property type="evidence" value="ECO:0007669"/>
    <property type="project" value="UniProtKB-KW"/>
</dbReference>
<dbReference type="GO" id="GO:0030247">
    <property type="term" value="F:polysaccharide binding"/>
    <property type="evidence" value="ECO:0007669"/>
    <property type="project" value="InterPro"/>
</dbReference>
<dbReference type="GO" id="GO:0003723">
    <property type="term" value="F:RNA binding"/>
    <property type="evidence" value="ECO:0000250"/>
    <property type="project" value="UniProtKB"/>
</dbReference>
<dbReference type="GO" id="GO:0004521">
    <property type="term" value="F:RNA endonuclease activity"/>
    <property type="evidence" value="ECO:0000250"/>
    <property type="project" value="UniProtKB"/>
</dbReference>
<dbReference type="GO" id="GO:0005044">
    <property type="term" value="F:scavenger receptor activity"/>
    <property type="evidence" value="ECO:0007669"/>
    <property type="project" value="InterPro"/>
</dbReference>
<dbReference type="GO" id="GO:0008236">
    <property type="term" value="F:serine-type peptidase activity"/>
    <property type="evidence" value="ECO:0000250"/>
    <property type="project" value="UniProtKB"/>
</dbReference>
<dbReference type="GO" id="GO:0007565">
    <property type="term" value="P:female pregnancy"/>
    <property type="evidence" value="ECO:0000250"/>
    <property type="project" value="UniProtKB"/>
</dbReference>
<dbReference type="GO" id="GO:0006955">
    <property type="term" value="P:immune response"/>
    <property type="evidence" value="ECO:0007669"/>
    <property type="project" value="InterPro"/>
</dbReference>
<dbReference type="GO" id="GO:0050995">
    <property type="term" value="P:negative regulation of lipid catabolic process"/>
    <property type="evidence" value="ECO:0007669"/>
    <property type="project" value="Ensembl"/>
</dbReference>
<dbReference type="GO" id="GO:0016441">
    <property type="term" value="P:post-transcriptional gene silencing"/>
    <property type="evidence" value="ECO:0007669"/>
    <property type="project" value="Ensembl"/>
</dbReference>
<dbReference type="GO" id="GO:0006508">
    <property type="term" value="P:proteolysis"/>
    <property type="evidence" value="ECO:0000250"/>
    <property type="project" value="UniProtKB"/>
</dbReference>
<dbReference type="CDD" id="cd21159">
    <property type="entry name" value="XendoU"/>
    <property type="match status" value="1"/>
</dbReference>
<dbReference type="FunFam" id="4.10.410.20:FF:000005">
    <property type="entry name" value="Endonuclease, poly(U) specific"/>
    <property type="match status" value="1"/>
</dbReference>
<dbReference type="FunFam" id="4.10.410.20:FF:000007">
    <property type="entry name" value="Poly(U)-specific endoribonuclease"/>
    <property type="match status" value="1"/>
</dbReference>
<dbReference type="Gene3D" id="4.10.410.20">
    <property type="match status" value="2"/>
</dbReference>
<dbReference type="InterPro" id="IPR039787">
    <property type="entry name" value="ENDOU"/>
</dbReference>
<dbReference type="InterPro" id="IPR037227">
    <property type="entry name" value="EndoU-like"/>
</dbReference>
<dbReference type="InterPro" id="IPR018998">
    <property type="entry name" value="EndoU_C"/>
</dbReference>
<dbReference type="InterPro" id="IPR020436">
    <property type="entry name" value="SMB_chordata"/>
</dbReference>
<dbReference type="InterPro" id="IPR036024">
    <property type="entry name" value="Somatomedin_B-like_dom_sf"/>
</dbReference>
<dbReference type="InterPro" id="IPR001212">
    <property type="entry name" value="Somatomedin_B_dom"/>
</dbReference>
<dbReference type="PANTHER" id="PTHR12439">
    <property type="entry name" value="PLACENTAL PROTEIN 11-RELATED"/>
    <property type="match status" value="1"/>
</dbReference>
<dbReference type="PANTHER" id="PTHR12439:SF40">
    <property type="entry name" value="URIDYLATE-SPECIFIC ENDORIBONUCLEASE"/>
    <property type="match status" value="1"/>
</dbReference>
<dbReference type="Pfam" id="PF01033">
    <property type="entry name" value="Somatomedin_B"/>
    <property type="match status" value="2"/>
</dbReference>
<dbReference type="Pfam" id="PF09412">
    <property type="entry name" value="XendoU"/>
    <property type="match status" value="1"/>
</dbReference>
<dbReference type="PRINTS" id="PR00022">
    <property type="entry name" value="SOMATOMEDINB"/>
</dbReference>
<dbReference type="SMART" id="SM00201">
    <property type="entry name" value="SO"/>
    <property type="match status" value="2"/>
</dbReference>
<dbReference type="SUPFAM" id="SSF142877">
    <property type="entry name" value="EndoU-like"/>
    <property type="match status" value="1"/>
</dbReference>
<dbReference type="SUPFAM" id="SSF90188">
    <property type="entry name" value="Somatomedin B domain"/>
    <property type="match status" value="2"/>
</dbReference>
<dbReference type="PROSITE" id="PS51959">
    <property type="entry name" value="ENDOU"/>
    <property type="match status" value="1"/>
</dbReference>
<dbReference type="PROSITE" id="PS00524">
    <property type="entry name" value="SMB_1"/>
    <property type="match status" value="2"/>
</dbReference>
<dbReference type="PROSITE" id="PS50958">
    <property type="entry name" value="SMB_2"/>
    <property type="match status" value="2"/>
</dbReference>
<name>ENDOU_MOUSE</name>
<comment type="function">
    <text evidence="1">Endoribonuclease that cleaves single-stranded RNAs at 5' of uridylates and releases a product with a 2',3'-cyclic phosphate at the 3'-end. The UU and GU sites are more efficiently cleaved than CU and AU sites. Targets mRNAs to regulate their expression (By similarity).</text>
</comment>
<comment type="catalytic activity">
    <reaction evidence="1">
        <text>ribonucleotidyl-uridine-RNA = a 5'-end dephospho-uridine-RNA + a 3'-end 2',3'-cyclophospho-ribonucleotide-RNA</text>
        <dbReference type="Rhea" id="RHEA:67792"/>
        <dbReference type="Rhea" id="RHEA-COMP:10464"/>
        <dbReference type="Rhea" id="RHEA-COMP:17354"/>
        <dbReference type="Rhea" id="RHEA-COMP:17356"/>
        <dbReference type="ChEBI" id="CHEBI:83064"/>
        <dbReference type="ChEBI" id="CHEBI:173117"/>
        <dbReference type="ChEBI" id="CHEBI:173224"/>
    </reaction>
    <physiologicalReaction direction="left-to-right" evidence="1">
        <dbReference type="Rhea" id="RHEA:67793"/>
    </physiologicalReaction>
</comment>
<comment type="cofactor">
    <cofactor evidence="4">
        <name>Mn(2+)</name>
        <dbReference type="ChEBI" id="CHEBI:29035"/>
    </cofactor>
</comment>
<comment type="subunit">
    <text evidence="4">Monomer.</text>
</comment>
<comment type="subcellular location">
    <subcellularLocation>
        <location evidence="8">Secreted</location>
    </subcellularLocation>
</comment>
<comment type="alternative products">
    <event type="alternative splicing"/>
    <isoform>
        <id>Q3V188-1</id>
        <name>1</name>
        <sequence type="displayed"/>
    </isoform>
    <isoform>
        <id>Q3V188-2</id>
        <name>2</name>
        <sequence type="described" ref="VSP_039224"/>
    </isoform>
</comment>
<comment type="tissue specificity">
    <text evidence="5 6">Specifically expressed in T-cells during apoptosis. Expressed in surface heat stable antigen (HSA)-containing T-cells populations (CD4(-)CD8(-)HSA(+), CD4(+)CD8(-)HSA(+), CD4(-)CD8(+)HSA(+), and CD4(+)CD8(+)HSA(+)) and not in the HSA(-) single positive T-cell populations of the thymus or spleen, suggesting that expression is lost during T-cell maturation and is absent at the most mature stages of T-cell development.</text>
</comment>
<comment type="similarity">
    <text evidence="4">Belongs to the ENDOU family.</text>
</comment>
<gene>
    <name type="primary">Endou</name>
    <name type="synonym">Pp11r</name>
</gene>
<keyword id="KW-0025">Alternative splicing</keyword>
<keyword id="KW-1015">Disulfide bond</keyword>
<keyword id="KW-0255">Endonuclease</keyword>
<keyword id="KW-0378">Hydrolase</keyword>
<keyword id="KW-0456">Lyase</keyword>
<keyword id="KW-0464">Manganese</keyword>
<keyword id="KW-0479">Metal-binding</keyword>
<keyword id="KW-0540">Nuclease</keyword>
<keyword id="KW-1185">Reference proteome</keyword>
<keyword id="KW-0677">Repeat</keyword>
<keyword id="KW-0694">RNA-binding</keyword>
<keyword id="KW-0964">Secreted</keyword>
<keyword id="KW-0732">Signal</keyword>
<sequence length="412" mass="47010">MKARVPFIVAMLCGLAWAGNLESCASRCHEKFNRDAVCQCDRRCPQHDDCCDDYEHLCTAEEGPPEPEAFLDPEDKIPTSHLYSAPSSCQGRCREAYDKHHPCHCNDRCPEFGNCCEDFDSLCGGDHEGFSHSSDAVTKEELESISETIYRVDTNKAQKEDIVLNSQNRISPSETGNQVDRSPEPLFTYVNEKLFSKPTYAAFINLLNNYQRATGHGEHFSAQQLEEQGVFLREVMKTAVMKELYSFLHHQNRYSSEQEFVDDLKNMWFGLYSRGNDEGDSSGFEHVFSGEVKKGKVTGFHNWIRFYLQEKEGLLDYYSHNYDGPWDSYPDVLAMQFNWDGYYKEVGSVFIGSSPEFEFALYSLCFITRPGKKCHLSLGGYPLAIQTYTWDKTTYGNGKKYIATAYVVSSSQ</sequence>
<proteinExistence type="evidence at transcript level"/>
<reference key="1">
    <citation type="journal article" date="1992" name="J. Immunol.">
        <title>Tcl-30, a new T cell-specific gene expressed in immature glucocorticoid-sensitive thymocytes.</title>
        <authorList>
            <person name="Baughman G."/>
            <person name="Lesley J."/>
            <person name="Trotter J."/>
            <person name="Hyman R."/>
            <person name="Bourgeois S."/>
        </authorList>
    </citation>
    <scope>NUCLEOTIDE SEQUENCE [MRNA] (ISOFORM 2)</scope>
    <scope>TISSUE SPECIFICITY</scope>
    <source>
        <strain>BALB/cJ</strain>
    </source>
</reference>
<reference key="2">
    <citation type="journal article" date="2005" name="Science">
        <title>The transcriptional landscape of the mammalian genome.</title>
        <authorList>
            <person name="Carninci P."/>
            <person name="Kasukawa T."/>
            <person name="Katayama S."/>
            <person name="Gough J."/>
            <person name="Frith M.C."/>
            <person name="Maeda N."/>
            <person name="Oyama R."/>
            <person name="Ravasi T."/>
            <person name="Lenhard B."/>
            <person name="Wells C."/>
            <person name="Kodzius R."/>
            <person name="Shimokawa K."/>
            <person name="Bajic V.B."/>
            <person name="Brenner S.E."/>
            <person name="Batalov S."/>
            <person name="Forrest A.R."/>
            <person name="Zavolan M."/>
            <person name="Davis M.J."/>
            <person name="Wilming L.G."/>
            <person name="Aidinis V."/>
            <person name="Allen J.E."/>
            <person name="Ambesi-Impiombato A."/>
            <person name="Apweiler R."/>
            <person name="Aturaliya R.N."/>
            <person name="Bailey T.L."/>
            <person name="Bansal M."/>
            <person name="Baxter L."/>
            <person name="Beisel K.W."/>
            <person name="Bersano T."/>
            <person name="Bono H."/>
            <person name="Chalk A.M."/>
            <person name="Chiu K.P."/>
            <person name="Choudhary V."/>
            <person name="Christoffels A."/>
            <person name="Clutterbuck D.R."/>
            <person name="Crowe M.L."/>
            <person name="Dalla E."/>
            <person name="Dalrymple B.P."/>
            <person name="de Bono B."/>
            <person name="Della Gatta G."/>
            <person name="di Bernardo D."/>
            <person name="Down T."/>
            <person name="Engstrom P."/>
            <person name="Fagiolini M."/>
            <person name="Faulkner G."/>
            <person name="Fletcher C.F."/>
            <person name="Fukushima T."/>
            <person name="Furuno M."/>
            <person name="Futaki S."/>
            <person name="Gariboldi M."/>
            <person name="Georgii-Hemming P."/>
            <person name="Gingeras T.R."/>
            <person name="Gojobori T."/>
            <person name="Green R.E."/>
            <person name="Gustincich S."/>
            <person name="Harbers M."/>
            <person name="Hayashi Y."/>
            <person name="Hensch T.K."/>
            <person name="Hirokawa N."/>
            <person name="Hill D."/>
            <person name="Huminiecki L."/>
            <person name="Iacono M."/>
            <person name="Ikeo K."/>
            <person name="Iwama A."/>
            <person name="Ishikawa T."/>
            <person name="Jakt M."/>
            <person name="Kanapin A."/>
            <person name="Katoh M."/>
            <person name="Kawasawa Y."/>
            <person name="Kelso J."/>
            <person name="Kitamura H."/>
            <person name="Kitano H."/>
            <person name="Kollias G."/>
            <person name="Krishnan S.P."/>
            <person name="Kruger A."/>
            <person name="Kummerfeld S.K."/>
            <person name="Kurochkin I.V."/>
            <person name="Lareau L.F."/>
            <person name="Lazarevic D."/>
            <person name="Lipovich L."/>
            <person name="Liu J."/>
            <person name="Liuni S."/>
            <person name="McWilliam S."/>
            <person name="Madan Babu M."/>
            <person name="Madera M."/>
            <person name="Marchionni L."/>
            <person name="Matsuda H."/>
            <person name="Matsuzawa S."/>
            <person name="Miki H."/>
            <person name="Mignone F."/>
            <person name="Miyake S."/>
            <person name="Morris K."/>
            <person name="Mottagui-Tabar S."/>
            <person name="Mulder N."/>
            <person name="Nakano N."/>
            <person name="Nakauchi H."/>
            <person name="Ng P."/>
            <person name="Nilsson R."/>
            <person name="Nishiguchi S."/>
            <person name="Nishikawa S."/>
            <person name="Nori F."/>
            <person name="Ohara O."/>
            <person name="Okazaki Y."/>
            <person name="Orlando V."/>
            <person name="Pang K.C."/>
            <person name="Pavan W.J."/>
            <person name="Pavesi G."/>
            <person name="Pesole G."/>
            <person name="Petrovsky N."/>
            <person name="Piazza S."/>
            <person name="Reed J."/>
            <person name="Reid J.F."/>
            <person name="Ring B.Z."/>
            <person name="Ringwald M."/>
            <person name="Rost B."/>
            <person name="Ruan Y."/>
            <person name="Salzberg S.L."/>
            <person name="Sandelin A."/>
            <person name="Schneider C."/>
            <person name="Schoenbach C."/>
            <person name="Sekiguchi K."/>
            <person name="Semple C.A."/>
            <person name="Seno S."/>
            <person name="Sessa L."/>
            <person name="Sheng Y."/>
            <person name="Shibata Y."/>
            <person name="Shimada H."/>
            <person name="Shimada K."/>
            <person name="Silva D."/>
            <person name="Sinclair B."/>
            <person name="Sperling S."/>
            <person name="Stupka E."/>
            <person name="Sugiura K."/>
            <person name="Sultana R."/>
            <person name="Takenaka Y."/>
            <person name="Taki K."/>
            <person name="Tammoja K."/>
            <person name="Tan S.L."/>
            <person name="Tang S."/>
            <person name="Taylor M.S."/>
            <person name="Tegner J."/>
            <person name="Teichmann S.A."/>
            <person name="Ueda H.R."/>
            <person name="van Nimwegen E."/>
            <person name="Verardo R."/>
            <person name="Wei C.L."/>
            <person name="Yagi K."/>
            <person name="Yamanishi H."/>
            <person name="Zabarovsky E."/>
            <person name="Zhu S."/>
            <person name="Zimmer A."/>
            <person name="Hide W."/>
            <person name="Bult C."/>
            <person name="Grimmond S.M."/>
            <person name="Teasdale R.D."/>
            <person name="Liu E.T."/>
            <person name="Brusic V."/>
            <person name="Quackenbush J."/>
            <person name="Wahlestedt C."/>
            <person name="Mattick J.S."/>
            <person name="Hume D.A."/>
            <person name="Kai C."/>
            <person name="Sasaki D."/>
            <person name="Tomaru Y."/>
            <person name="Fukuda S."/>
            <person name="Kanamori-Katayama M."/>
            <person name="Suzuki M."/>
            <person name="Aoki J."/>
            <person name="Arakawa T."/>
            <person name="Iida J."/>
            <person name="Imamura K."/>
            <person name="Itoh M."/>
            <person name="Kato T."/>
            <person name="Kawaji H."/>
            <person name="Kawagashira N."/>
            <person name="Kawashima T."/>
            <person name="Kojima M."/>
            <person name="Kondo S."/>
            <person name="Konno H."/>
            <person name="Nakano K."/>
            <person name="Ninomiya N."/>
            <person name="Nishio T."/>
            <person name="Okada M."/>
            <person name="Plessy C."/>
            <person name="Shibata K."/>
            <person name="Shiraki T."/>
            <person name="Suzuki S."/>
            <person name="Tagami M."/>
            <person name="Waki K."/>
            <person name="Watahiki A."/>
            <person name="Okamura-Oho Y."/>
            <person name="Suzuki H."/>
            <person name="Kawai J."/>
            <person name="Hayashizaki Y."/>
        </authorList>
    </citation>
    <scope>NUCLEOTIDE SEQUENCE [LARGE SCALE MRNA] (ISOFORM 1)</scope>
    <source>
        <strain>C57BL/6J</strain>
        <tissue>Head</tissue>
    </source>
</reference>
<reference key="3">
    <citation type="journal article" date="1993" name="Mamm. Genome">
        <title>Genetic mapping of Pp11r, a thymocyte gene expressed during apoptosis, to mouse chromosome 15.</title>
        <authorList>
            <person name="Kingsmore S.F."/>
            <person name="Bieniarz M.C."/>
            <person name="Watson M.L."/>
            <person name="Seldin M.F."/>
        </authorList>
    </citation>
    <scope>TISSUE SPECIFICITY</scope>
</reference>
<feature type="signal peptide" evidence="2">
    <location>
        <begin position="1"/>
        <end position="18"/>
    </location>
</feature>
<feature type="chain" id="PRO_0000394222" description="Uridylate-specific endoribonuclease" evidence="2">
    <location>
        <begin position="19"/>
        <end position="412"/>
    </location>
</feature>
<feature type="domain" description="SMB 1" evidence="3">
    <location>
        <begin position="20"/>
        <end position="63"/>
    </location>
</feature>
<feature type="domain" description="SMB 2" evidence="3">
    <location>
        <begin position="85"/>
        <end position="128"/>
    </location>
</feature>
<feature type="domain" description="EndoU" evidence="4">
    <location>
        <begin position="138"/>
        <end position="411"/>
    </location>
</feature>
<feature type="active site" evidence="4">
    <location>
        <position position="286"/>
    </location>
</feature>
<feature type="active site" evidence="4">
    <location>
        <position position="301"/>
    </location>
</feature>
<feature type="active site" evidence="4">
    <location>
        <position position="344"/>
    </location>
</feature>
<feature type="disulfide bond" description="Alternate" evidence="3">
    <location>
        <begin position="24"/>
        <end position="40"/>
    </location>
</feature>
<feature type="disulfide bond" description="Alternate" evidence="3">
    <location>
        <begin position="24"/>
        <end position="28"/>
    </location>
</feature>
<feature type="disulfide bond" description="Alternate" evidence="3">
    <location>
        <begin position="28"/>
        <end position="58"/>
    </location>
</feature>
<feature type="disulfide bond" description="Alternate" evidence="3">
    <location>
        <begin position="38"/>
        <end position="51"/>
    </location>
</feature>
<feature type="disulfide bond" description="Alternate" evidence="3">
    <location>
        <begin position="38"/>
        <end position="40"/>
    </location>
</feature>
<feature type="disulfide bond" evidence="3">
    <location>
        <begin position="44"/>
        <end position="50"/>
    </location>
</feature>
<feature type="disulfide bond" description="Alternate" evidence="3">
    <location>
        <begin position="51"/>
        <end position="58"/>
    </location>
</feature>
<feature type="disulfide bond" description="Alternate" evidence="3">
    <location>
        <begin position="89"/>
        <end position="105"/>
    </location>
</feature>
<feature type="disulfide bond" description="Alternate" evidence="3">
    <location>
        <begin position="89"/>
        <end position="93"/>
    </location>
</feature>
<feature type="disulfide bond" description="Alternate" evidence="3">
    <location>
        <begin position="93"/>
        <end position="123"/>
    </location>
</feature>
<feature type="disulfide bond" description="Alternate" evidence="3">
    <location>
        <begin position="103"/>
        <end position="116"/>
    </location>
</feature>
<feature type="disulfide bond" description="Alternate" evidence="3">
    <location>
        <begin position="103"/>
        <end position="105"/>
    </location>
</feature>
<feature type="disulfide bond" evidence="3">
    <location>
        <begin position="109"/>
        <end position="115"/>
    </location>
</feature>
<feature type="disulfide bond" description="Alternate" evidence="3">
    <location>
        <begin position="116"/>
        <end position="123"/>
    </location>
</feature>
<feature type="splice variant" id="VSP_039224" description="In isoform 2." evidence="7">
    <original>MKARVPFIVAMLCGLAWAGNLESCASRCHEKFNRDAVCQCDRRCPQHDDCCDDYEHLCT</original>
    <variation>MLNCSIHVGQLKLVFNPEGAPLSLPFFTYFSFYIFWVQWAPNARMVENLSPGEIIFVLFCLSFPSSDLGKPSIFSVLSLLCQIGGWDGMCEYPFNTCACLQ</variation>
    <location>
        <begin position="1"/>
        <end position="59"/>
    </location>
</feature>